<protein>
    <recommendedName>
        <fullName evidence="1">ATP synthase subunit a, chloroplastic</fullName>
    </recommendedName>
    <alternativeName>
        <fullName evidence="1">ATP synthase F0 sector subunit a</fullName>
    </alternativeName>
    <alternativeName>
        <fullName evidence="1">F-ATPase subunit IV</fullName>
    </alternativeName>
</protein>
<proteinExistence type="inferred from homology"/>
<reference key="1">
    <citation type="journal article" date="2008" name="Theor. Appl. Genet.">
        <title>The complete nucleotide sequence of the cassava (Manihot esculenta) chloroplast genome and the evolution of atpF in Malpighiales: RNA editing and multiple losses of a group II intron.</title>
        <authorList>
            <person name="Daniell H."/>
            <person name="Wurdack K.J."/>
            <person name="Kanagaraj A."/>
            <person name="Lee S.-B."/>
            <person name="Saski C."/>
            <person name="Jansen R.K."/>
        </authorList>
    </citation>
    <scope>NUCLEOTIDE SEQUENCE [LARGE SCALE GENOMIC DNA]</scope>
    <source>
        <strain>cv. TME3</strain>
    </source>
</reference>
<evidence type="ECO:0000255" key="1">
    <source>
        <dbReference type="HAMAP-Rule" id="MF_01393"/>
    </source>
</evidence>
<accession>B1NWD8</accession>
<geneLocation type="chloroplast"/>
<name>ATPI_MANES</name>
<feature type="chain" id="PRO_0000362571" description="ATP synthase subunit a, chloroplastic">
    <location>
        <begin position="1"/>
        <end position="249"/>
    </location>
</feature>
<feature type="transmembrane region" description="Helical" evidence="1">
    <location>
        <begin position="40"/>
        <end position="60"/>
    </location>
</feature>
<feature type="transmembrane region" description="Helical" evidence="1">
    <location>
        <begin position="97"/>
        <end position="117"/>
    </location>
</feature>
<feature type="transmembrane region" description="Helical" evidence="1">
    <location>
        <begin position="136"/>
        <end position="156"/>
    </location>
</feature>
<feature type="transmembrane region" description="Helical" evidence="1">
    <location>
        <begin position="201"/>
        <end position="221"/>
    </location>
</feature>
<feature type="transmembrane region" description="Helical" evidence="1">
    <location>
        <begin position="222"/>
        <end position="242"/>
    </location>
</feature>
<organism>
    <name type="scientific">Manihot esculenta</name>
    <name type="common">Cassava</name>
    <name type="synonym">Jatropha manihot</name>
    <dbReference type="NCBI Taxonomy" id="3983"/>
    <lineage>
        <taxon>Eukaryota</taxon>
        <taxon>Viridiplantae</taxon>
        <taxon>Streptophyta</taxon>
        <taxon>Embryophyta</taxon>
        <taxon>Tracheophyta</taxon>
        <taxon>Spermatophyta</taxon>
        <taxon>Magnoliopsida</taxon>
        <taxon>eudicotyledons</taxon>
        <taxon>Gunneridae</taxon>
        <taxon>Pentapetalae</taxon>
        <taxon>rosids</taxon>
        <taxon>fabids</taxon>
        <taxon>Malpighiales</taxon>
        <taxon>Euphorbiaceae</taxon>
        <taxon>Crotonoideae</taxon>
        <taxon>Manihoteae</taxon>
        <taxon>Manihot</taxon>
    </lineage>
</organism>
<gene>
    <name evidence="1" type="primary">atpI</name>
</gene>
<comment type="function">
    <text evidence="1">Key component of the proton channel; it plays a direct role in the translocation of protons across the membrane.</text>
</comment>
<comment type="subunit">
    <text evidence="1">F-type ATPases have 2 components, CF(1) - the catalytic core - and CF(0) - the membrane proton channel. CF(1) has five subunits: alpha(3), beta(3), gamma(1), delta(1), epsilon(1). CF(0) has four main subunits: a, b, b' and c.</text>
</comment>
<comment type="subcellular location">
    <subcellularLocation>
        <location evidence="1">Plastid</location>
        <location evidence="1">Chloroplast thylakoid membrane</location>
        <topology evidence="1">Multi-pass membrane protein</topology>
    </subcellularLocation>
</comment>
<comment type="similarity">
    <text evidence="1">Belongs to the ATPase A chain family.</text>
</comment>
<sequence>MNVLSCSINTLTLRGLYDISGVEVGQHFYWKIGGFQVHAQVLITSWVVIAILLGSAIVAVRNPQTIPTGGQNFFEYVLEFIRDVSKTQIGEEYGPWVPFIGTMFLFIFVSNWAGALLPWKIIQLPHGELAAPTNDINTTVALALLTSIAYFYAGLSKKGLGYFSKYIQPTPILLPINILEDFTKPLSLSFRLFGNILADELVVVVLVSLVPSVVPIPVMFLGLFTSGIQALIFATLAAAYIGESMEGHH</sequence>
<dbReference type="EMBL" id="EU117376">
    <property type="protein sequence ID" value="ABV66142.1"/>
    <property type="molecule type" value="Genomic_DNA"/>
</dbReference>
<dbReference type="RefSeq" id="YP_001718425.1">
    <property type="nucleotide sequence ID" value="NC_010433.1"/>
</dbReference>
<dbReference type="SMR" id="B1NWD8"/>
<dbReference type="GeneID" id="5999986"/>
<dbReference type="KEGG" id="mesc:5999986"/>
<dbReference type="OrthoDB" id="2303at2759"/>
<dbReference type="GO" id="GO:0009535">
    <property type="term" value="C:chloroplast thylakoid membrane"/>
    <property type="evidence" value="ECO:0007669"/>
    <property type="project" value="UniProtKB-SubCell"/>
</dbReference>
<dbReference type="GO" id="GO:0005886">
    <property type="term" value="C:plasma membrane"/>
    <property type="evidence" value="ECO:0007669"/>
    <property type="project" value="UniProtKB-UniRule"/>
</dbReference>
<dbReference type="GO" id="GO:0045259">
    <property type="term" value="C:proton-transporting ATP synthase complex"/>
    <property type="evidence" value="ECO:0007669"/>
    <property type="project" value="UniProtKB-KW"/>
</dbReference>
<dbReference type="GO" id="GO:0046933">
    <property type="term" value="F:proton-transporting ATP synthase activity, rotational mechanism"/>
    <property type="evidence" value="ECO:0007669"/>
    <property type="project" value="UniProtKB-UniRule"/>
</dbReference>
<dbReference type="CDD" id="cd00310">
    <property type="entry name" value="ATP-synt_Fo_a_6"/>
    <property type="match status" value="1"/>
</dbReference>
<dbReference type="FunFam" id="1.20.120.220:FF:000001">
    <property type="entry name" value="ATP synthase subunit a, chloroplastic"/>
    <property type="match status" value="1"/>
</dbReference>
<dbReference type="Gene3D" id="1.20.120.220">
    <property type="entry name" value="ATP synthase, F0 complex, subunit A"/>
    <property type="match status" value="1"/>
</dbReference>
<dbReference type="HAMAP" id="MF_01393">
    <property type="entry name" value="ATP_synth_a_bact"/>
    <property type="match status" value="1"/>
</dbReference>
<dbReference type="InterPro" id="IPR045082">
    <property type="entry name" value="ATP_syn_F0_a_bact/chloroplast"/>
</dbReference>
<dbReference type="InterPro" id="IPR000568">
    <property type="entry name" value="ATP_synth_F0_asu"/>
</dbReference>
<dbReference type="InterPro" id="IPR023011">
    <property type="entry name" value="ATP_synth_F0_asu_AS"/>
</dbReference>
<dbReference type="InterPro" id="IPR035908">
    <property type="entry name" value="F0_ATP_A_sf"/>
</dbReference>
<dbReference type="NCBIfam" id="TIGR01131">
    <property type="entry name" value="ATP_synt_6_or_A"/>
    <property type="match status" value="1"/>
</dbReference>
<dbReference type="PANTHER" id="PTHR42823">
    <property type="entry name" value="ATP SYNTHASE SUBUNIT A, CHLOROPLASTIC"/>
    <property type="match status" value="1"/>
</dbReference>
<dbReference type="PANTHER" id="PTHR42823:SF3">
    <property type="entry name" value="ATP SYNTHASE SUBUNIT A, CHLOROPLASTIC"/>
    <property type="match status" value="1"/>
</dbReference>
<dbReference type="Pfam" id="PF00119">
    <property type="entry name" value="ATP-synt_A"/>
    <property type="match status" value="1"/>
</dbReference>
<dbReference type="PRINTS" id="PR00123">
    <property type="entry name" value="ATPASEA"/>
</dbReference>
<dbReference type="SUPFAM" id="SSF81336">
    <property type="entry name" value="F1F0 ATP synthase subunit A"/>
    <property type="match status" value="1"/>
</dbReference>
<dbReference type="PROSITE" id="PS00449">
    <property type="entry name" value="ATPASE_A"/>
    <property type="match status" value="1"/>
</dbReference>
<keyword id="KW-0066">ATP synthesis</keyword>
<keyword id="KW-0138">CF(0)</keyword>
<keyword id="KW-0150">Chloroplast</keyword>
<keyword id="KW-0375">Hydrogen ion transport</keyword>
<keyword id="KW-0406">Ion transport</keyword>
<keyword id="KW-0472">Membrane</keyword>
<keyword id="KW-0934">Plastid</keyword>
<keyword id="KW-0793">Thylakoid</keyword>
<keyword id="KW-0812">Transmembrane</keyword>
<keyword id="KW-1133">Transmembrane helix</keyword>
<keyword id="KW-0813">Transport</keyword>